<proteinExistence type="inferred from homology"/>
<organism>
    <name type="scientific">Vibrio vulnificus (strain CMCP6)</name>
    <dbReference type="NCBI Taxonomy" id="216895"/>
    <lineage>
        <taxon>Bacteria</taxon>
        <taxon>Pseudomonadati</taxon>
        <taxon>Pseudomonadota</taxon>
        <taxon>Gammaproteobacteria</taxon>
        <taxon>Vibrionales</taxon>
        <taxon>Vibrionaceae</taxon>
        <taxon>Vibrio</taxon>
    </lineage>
</organism>
<accession>Q8D889</accession>
<reference key="1">
    <citation type="submission" date="2002-12" db="EMBL/GenBank/DDBJ databases">
        <title>Complete genome sequence of Vibrio vulnificus CMCP6.</title>
        <authorList>
            <person name="Rhee J.H."/>
            <person name="Kim S.Y."/>
            <person name="Chung S.S."/>
            <person name="Kim J.J."/>
            <person name="Moon Y.H."/>
            <person name="Jeong H."/>
            <person name="Choy H.E."/>
        </authorList>
    </citation>
    <scope>NUCLEOTIDE SEQUENCE [LARGE SCALE GENOMIC DNA]</scope>
    <source>
        <strain>CMCP6</strain>
    </source>
</reference>
<name>RNFB_VIBVU</name>
<gene>
    <name evidence="1" type="primary">rnfB</name>
    <name type="ordered locus">VV1_3094</name>
</gene>
<feature type="chain" id="PRO_0000216282" description="Ion-translocating oxidoreductase complex subunit B">
    <location>
        <begin position="1"/>
        <end position="198"/>
    </location>
</feature>
<feature type="domain" description="4Fe-4S" evidence="1">
    <location>
        <begin position="32"/>
        <end position="90"/>
    </location>
</feature>
<feature type="domain" description="4Fe-4S ferredoxin-type 1" evidence="1">
    <location>
        <begin position="105"/>
        <end position="134"/>
    </location>
</feature>
<feature type="domain" description="4Fe-4S ferredoxin-type 2" evidence="1">
    <location>
        <begin position="135"/>
        <end position="164"/>
    </location>
</feature>
<feature type="region of interest" description="Hydrophobic" evidence="1">
    <location>
        <begin position="1"/>
        <end position="26"/>
    </location>
</feature>
<feature type="binding site" evidence="1">
    <location>
        <position position="49"/>
    </location>
    <ligand>
        <name>[4Fe-4S] cluster</name>
        <dbReference type="ChEBI" id="CHEBI:49883"/>
        <label>1</label>
    </ligand>
</feature>
<feature type="binding site" evidence="1">
    <location>
        <position position="52"/>
    </location>
    <ligand>
        <name>[4Fe-4S] cluster</name>
        <dbReference type="ChEBI" id="CHEBI:49883"/>
        <label>1</label>
    </ligand>
</feature>
<feature type="binding site" evidence="1">
    <location>
        <position position="57"/>
    </location>
    <ligand>
        <name>[4Fe-4S] cluster</name>
        <dbReference type="ChEBI" id="CHEBI:49883"/>
        <label>1</label>
    </ligand>
</feature>
<feature type="binding site" evidence="1">
    <location>
        <position position="73"/>
    </location>
    <ligand>
        <name>[4Fe-4S] cluster</name>
        <dbReference type="ChEBI" id="CHEBI:49883"/>
        <label>1</label>
    </ligand>
</feature>
<feature type="binding site" evidence="1">
    <location>
        <position position="114"/>
    </location>
    <ligand>
        <name>[4Fe-4S] cluster</name>
        <dbReference type="ChEBI" id="CHEBI:49883"/>
        <label>2</label>
    </ligand>
</feature>
<feature type="binding site" evidence="1">
    <location>
        <position position="117"/>
    </location>
    <ligand>
        <name>[4Fe-4S] cluster</name>
        <dbReference type="ChEBI" id="CHEBI:49883"/>
        <label>2</label>
    </ligand>
</feature>
<feature type="binding site" evidence="1">
    <location>
        <position position="120"/>
    </location>
    <ligand>
        <name>[4Fe-4S] cluster</name>
        <dbReference type="ChEBI" id="CHEBI:49883"/>
        <label>2</label>
    </ligand>
</feature>
<feature type="binding site" evidence="1">
    <location>
        <position position="124"/>
    </location>
    <ligand>
        <name>[4Fe-4S] cluster</name>
        <dbReference type="ChEBI" id="CHEBI:49883"/>
        <label>3</label>
    </ligand>
</feature>
<feature type="binding site" evidence="1">
    <location>
        <position position="144"/>
    </location>
    <ligand>
        <name>[4Fe-4S] cluster</name>
        <dbReference type="ChEBI" id="CHEBI:49883"/>
        <label>3</label>
    </ligand>
</feature>
<feature type="binding site" evidence="1">
    <location>
        <position position="147"/>
    </location>
    <ligand>
        <name>[4Fe-4S] cluster</name>
        <dbReference type="ChEBI" id="CHEBI:49883"/>
        <label>3</label>
    </ligand>
</feature>
<feature type="binding site" evidence="1">
    <location>
        <position position="150"/>
    </location>
    <ligand>
        <name>[4Fe-4S] cluster</name>
        <dbReference type="ChEBI" id="CHEBI:49883"/>
        <label>3</label>
    </ligand>
</feature>
<feature type="binding site" evidence="1">
    <location>
        <position position="154"/>
    </location>
    <ligand>
        <name>[4Fe-4S] cluster</name>
        <dbReference type="ChEBI" id="CHEBI:49883"/>
        <label>2</label>
    </ligand>
</feature>
<comment type="function">
    <text evidence="1">Part of a membrane-bound complex that couples electron transfer with translocation of ions across the membrane.</text>
</comment>
<comment type="cofactor">
    <cofactor evidence="1">
        <name>[4Fe-4S] cluster</name>
        <dbReference type="ChEBI" id="CHEBI:49883"/>
    </cofactor>
    <text evidence="1">Binds 3 [4Fe-4S] clusters.</text>
</comment>
<comment type="subunit">
    <text evidence="1">The complex is composed of six subunits: RnfA, RnfB, RnfC, RnfD, RnfE and RnfG.</text>
</comment>
<comment type="subcellular location">
    <subcellularLocation>
        <location evidence="1">Cell inner membrane</location>
    </subcellularLocation>
</comment>
<comment type="similarity">
    <text evidence="1">Belongs to the 4Fe4S bacterial-type ferredoxin family. RnfB subfamily.</text>
</comment>
<sequence length="198" mass="21023">MTTIMIAVLAIALLATLFGAILGFASIRFKVEADPIVDQIDAILPQTQCGQCGYPGCRPYAEAIANGDSINKCPPGGQATIEKLADLMGVEAEESAHDLEGKVKKVAFIHEDMCIGCTKCIQACPVDAIVGGTKALHTVIKDECTGCDLCVAPCPTDCIEMIPLETTTETWKWQLNAIPVVNISEANPNSATSRDQNN</sequence>
<dbReference type="EC" id="7.-.-.-" evidence="1"/>
<dbReference type="EMBL" id="AE016795">
    <property type="protein sequence ID" value="AAO11417.1"/>
    <property type="molecule type" value="Genomic_DNA"/>
</dbReference>
<dbReference type="SMR" id="Q8D889"/>
<dbReference type="KEGG" id="vvu:VV1_3094"/>
<dbReference type="HOGENOM" id="CLU_063448_2_0_6"/>
<dbReference type="Proteomes" id="UP000002275">
    <property type="component" value="Chromosome 1"/>
</dbReference>
<dbReference type="GO" id="GO:0005886">
    <property type="term" value="C:plasma membrane"/>
    <property type="evidence" value="ECO:0007669"/>
    <property type="project" value="UniProtKB-SubCell"/>
</dbReference>
<dbReference type="GO" id="GO:0051539">
    <property type="term" value="F:4 iron, 4 sulfur cluster binding"/>
    <property type="evidence" value="ECO:0007669"/>
    <property type="project" value="UniProtKB-UniRule"/>
</dbReference>
<dbReference type="GO" id="GO:0009055">
    <property type="term" value="F:electron transfer activity"/>
    <property type="evidence" value="ECO:0007669"/>
    <property type="project" value="InterPro"/>
</dbReference>
<dbReference type="GO" id="GO:0046872">
    <property type="term" value="F:metal ion binding"/>
    <property type="evidence" value="ECO:0007669"/>
    <property type="project" value="UniProtKB-KW"/>
</dbReference>
<dbReference type="GO" id="GO:0022900">
    <property type="term" value="P:electron transport chain"/>
    <property type="evidence" value="ECO:0007669"/>
    <property type="project" value="UniProtKB-UniRule"/>
</dbReference>
<dbReference type="FunFam" id="1.10.15.40:FF:000001">
    <property type="entry name" value="Ion-translocating oxidoreductase complex subunit B"/>
    <property type="match status" value="1"/>
</dbReference>
<dbReference type="Gene3D" id="3.30.70.20">
    <property type="match status" value="2"/>
</dbReference>
<dbReference type="Gene3D" id="1.10.15.40">
    <property type="entry name" value="Electron transport complex subunit B, putative Fe-S cluster"/>
    <property type="match status" value="1"/>
</dbReference>
<dbReference type="HAMAP" id="MF_00463">
    <property type="entry name" value="RsxB_RnfB"/>
    <property type="match status" value="1"/>
</dbReference>
<dbReference type="InterPro" id="IPR007202">
    <property type="entry name" value="4Fe-4S_dom"/>
</dbReference>
<dbReference type="InterPro" id="IPR017896">
    <property type="entry name" value="4Fe4S_Fe-S-bd"/>
</dbReference>
<dbReference type="InterPro" id="IPR017900">
    <property type="entry name" value="4Fe4S_Fe_S_CS"/>
</dbReference>
<dbReference type="InterPro" id="IPR010207">
    <property type="entry name" value="Elect_transpt_cplx_RnfB/RsxB"/>
</dbReference>
<dbReference type="InterPro" id="IPR016463">
    <property type="entry name" value="RnfB/RsxB_Proteobac"/>
</dbReference>
<dbReference type="InterPro" id="IPR050294">
    <property type="entry name" value="RnfB_subfamily"/>
</dbReference>
<dbReference type="NCBIfam" id="NF003475">
    <property type="entry name" value="PRK05113.1"/>
    <property type="match status" value="1"/>
</dbReference>
<dbReference type="NCBIfam" id="TIGR01944">
    <property type="entry name" value="rnfB"/>
    <property type="match status" value="1"/>
</dbReference>
<dbReference type="PANTHER" id="PTHR42859:SF3">
    <property type="entry name" value="ION-TRANSLOCATING OXIDOREDUCTASE COMPLEX SUBUNIT B"/>
    <property type="match status" value="1"/>
</dbReference>
<dbReference type="PANTHER" id="PTHR42859">
    <property type="entry name" value="OXIDOREDUCTASE"/>
    <property type="match status" value="1"/>
</dbReference>
<dbReference type="Pfam" id="PF14697">
    <property type="entry name" value="Fer4_21"/>
    <property type="match status" value="1"/>
</dbReference>
<dbReference type="Pfam" id="PF04060">
    <property type="entry name" value="FeS"/>
    <property type="match status" value="1"/>
</dbReference>
<dbReference type="PIRSF" id="PIRSF005784">
    <property type="entry name" value="Elect_transpt_RnfB"/>
    <property type="match status" value="1"/>
</dbReference>
<dbReference type="SUPFAM" id="SSF54862">
    <property type="entry name" value="4Fe-4S ferredoxins"/>
    <property type="match status" value="1"/>
</dbReference>
<dbReference type="PROSITE" id="PS51656">
    <property type="entry name" value="4FE4S"/>
    <property type="match status" value="1"/>
</dbReference>
<dbReference type="PROSITE" id="PS00198">
    <property type="entry name" value="4FE4S_FER_1"/>
    <property type="match status" value="2"/>
</dbReference>
<dbReference type="PROSITE" id="PS51379">
    <property type="entry name" value="4FE4S_FER_2"/>
    <property type="match status" value="2"/>
</dbReference>
<protein>
    <recommendedName>
        <fullName evidence="1">Ion-translocating oxidoreductase complex subunit B</fullName>
        <ecNumber evidence="1">7.-.-.-</ecNumber>
    </recommendedName>
    <alternativeName>
        <fullName evidence="1">Rnf electron transport complex subunit B</fullName>
    </alternativeName>
</protein>
<evidence type="ECO:0000255" key="1">
    <source>
        <dbReference type="HAMAP-Rule" id="MF_00463"/>
    </source>
</evidence>
<keyword id="KW-0004">4Fe-4S</keyword>
<keyword id="KW-0997">Cell inner membrane</keyword>
<keyword id="KW-1003">Cell membrane</keyword>
<keyword id="KW-0249">Electron transport</keyword>
<keyword id="KW-0408">Iron</keyword>
<keyword id="KW-0411">Iron-sulfur</keyword>
<keyword id="KW-0472">Membrane</keyword>
<keyword id="KW-0479">Metal-binding</keyword>
<keyword id="KW-0677">Repeat</keyword>
<keyword id="KW-1278">Translocase</keyword>
<keyword id="KW-0813">Transport</keyword>